<dbReference type="EC" id="3.6.4.-" evidence="1"/>
<dbReference type="EMBL" id="CP000462">
    <property type="protein sequence ID" value="ABK36250.1"/>
    <property type="molecule type" value="Genomic_DNA"/>
</dbReference>
<dbReference type="RefSeq" id="WP_011704808.1">
    <property type="nucleotide sequence ID" value="NC_008570.1"/>
</dbReference>
<dbReference type="RefSeq" id="YP_855406.1">
    <property type="nucleotide sequence ID" value="NC_008570.1"/>
</dbReference>
<dbReference type="SMR" id="A0KGL5"/>
<dbReference type="STRING" id="380703.AHA_0864"/>
<dbReference type="EnsemblBacteria" id="ABK36250">
    <property type="protein sequence ID" value="ABK36250"/>
    <property type="gene ID" value="AHA_0864"/>
</dbReference>
<dbReference type="GeneID" id="4487248"/>
<dbReference type="KEGG" id="aha:AHA_0864"/>
<dbReference type="PATRIC" id="fig|380703.7.peg.868"/>
<dbReference type="eggNOG" id="COG0553">
    <property type="taxonomic scope" value="Bacteria"/>
</dbReference>
<dbReference type="HOGENOM" id="CLU_011520_0_0_6"/>
<dbReference type="OrthoDB" id="9814088at2"/>
<dbReference type="Proteomes" id="UP000000756">
    <property type="component" value="Chromosome"/>
</dbReference>
<dbReference type="GO" id="GO:0005524">
    <property type="term" value="F:ATP binding"/>
    <property type="evidence" value="ECO:0007669"/>
    <property type="project" value="UniProtKB-UniRule"/>
</dbReference>
<dbReference type="GO" id="GO:0003677">
    <property type="term" value="F:DNA binding"/>
    <property type="evidence" value="ECO:0007669"/>
    <property type="project" value="UniProtKB-KW"/>
</dbReference>
<dbReference type="GO" id="GO:0004386">
    <property type="term" value="F:helicase activity"/>
    <property type="evidence" value="ECO:0007669"/>
    <property type="project" value="UniProtKB-UniRule"/>
</dbReference>
<dbReference type="GO" id="GO:0016817">
    <property type="term" value="F:hydrolase activity, acting on acid anhydrides"/>
    <property type="evidence" value="ECO:0007669"/>
    <property type="project" value="InterPro"/>
</dbReference>
<dbReference type="GO" id="GO:0006355">
    <property type="term" value="P:regulation of DNA-templated transcription"/>
    <property type="evidence" value="ECO:0007669"/>
    <property type="project" value="UniProtKB-UniRule"/>
</dbReference>
<dbReference type="CDD" id="cd18011">
    <property type="entry name" value="DEXDc_RapA"/>
    <property type="match status" value="1"/>
</dbReference>
<dbReference type="CDD" id="cd18793">
    <property type="entry name" value="SF2_C_SNF"/>
    <property type="match status" value="1"/>
</dbReference>
<dbReference type="Gene3D" id="2.30.30.140">
    <property type="match status" value="1"/>
</dbReference>
<dbReference type="Gene3D" id="2.30.30.930">
    <property type="match status" value="1"/>
</dbReference>
<dbReference type="Gene3D" id="3.30.360.80">
    <property type="match status" value="1"/>
</dbReference>
<dbReference type="Gene3D" id="6.10.140.1500">
    <property type="match status" value="1"/>
</dbReference>
<dbReference type="Gene3D" id="6.10.140.2230">
    <property type="match status" value="1"/>
</dbReference>
<dbReference type="Gene3D" id="3.40.50.300">
    <property type="entry name" value="P-loop containing nucleotide triphosphate hydrolases"/>
    <property type="match status" value="1"/>
</dbReference>
<dbReference type="Gene3D" id="3.40.50.10810">
    <property type="entry name" value="Tandem AAA-ATPase domain"/>
    <property type="match status" value="1"/>
</dbReference>
<dbReference type="HAMAP" id="MF_01821">
    <property type="entry name" value="Helicase_RapA"/>
    <property type="match status" value="1"/>
</dbReference>
<dbReference type="InterPro" id="IPR014001">
    <property type="entry name" value="Helicase_ATP-bd"/>
</dbReference>
<dbReference type="InterPro" id="IPR001650">
    <property type="entry name" value="Helicase_C-like"/>
</dbReference>
<dbReference type="InterPro" id="IPR023949">
    <property type="entry name" value="Helicase_RapA"/>
</dbReference>
<dbReference type="InterPro" id="IPR027417">
    <property type="entry name" value="P-loop_NTPase"/>
</dbReference>
<dbReference type="InterPro" id="IPR022737">
    <property type="entry name" value="RapA_C"/>
</dbReference>
<dbReference type="InterPro" id="IPR038718">
    <property type="entry name" value="SNF2-like_sf"/>
</dbReference>
<dbReference type="InterPro" id="IPR049730">
    <property type="entry name" value="SNF2/RAD54-like_C"/>
</dbReference>
<dbReference type="InterPro" id="IPR000330">
    <property type="entry name" value="SNF2_N"/>
</dbReference>
<dbReference type="InterPro" id="IPR040765">
    <property type="entry name" value="Tudor_1_RapA"/>
</dbReference>
<dbReference type="InterPro" id="IPR040766">
    <property type="entry name" value="Tudor_2_RapA"/>
</dbReference>
<dbReference type="NCBIfam" id="NF003426">
    <property type="entry name" value="PRK04914.1"/>
    <property type="match status" value="1"/>
</dbReference>
<dbReference type="PANTHER" id="PTHR45766">
    <property type="entry name" value="DNA ANNEALING HELICASE AND ENDONUCLEASE ZRANB3 FAMILY MEMBER"/>
    <property type="match status" value="1"/>
</dbReference>
<dbReference type="PANTHER" id="PTHR45766:SF6">
    <property type="entry name" value="SWI_SNF-RELATED MATRIX-ASSOCIATED ACTIN-DEPENDENT REGULATOR OF CHROMATIN SUBFAMILY A-LIKE PROTEIN 1"/>
    <property type="match status" value="1"/>
</dbReference>
<dbReference type="Pfam" id="PF00271">
    <property type="entry name" value="Helicase_C"/>
    <property type="match status" value="1"/>
</dbReference>
<dbReference type="Pfam" id="PF12137">
    <property type="entry name" value="RapA_C"/>
    <property type="match status" value="1"/>
</dbReference>
<dbReference type="Pfam" id="PF00176">
    <property type="entry name" value="SNF2-rel_dom"/>
    <property type="match status" value="1"/>
</dbReference>
<dbReference type="Pfam" id="PF18339">
    <property type="entry name" value="Tudor_1_RapA"/>
    <property type="match status" value="1"/>
</dbReference>
<dbReference type="Pfam" id="PF18337">
    <property type="entry name" value="Tudor_RapA"/>
    <property type="match status" value="1"/>
</dbReference>
<dbReference type="SMART" id="SM00487">
    <property type="entry name" value="DEXDc"/>
    <property type="match status" value="1"/>
</dbReference>
<dbReference type="SMART" id="SM00490">
    <property type="entry name" value="HELICc"/>
    <property type="match status" value="1"/>
</dbReference>
<dbReference type="SUPFAM" id="SSF52540">
    <property type="entry name" value="P-loop containing nucleoside triphosphate hydrolases"/>
    <property type="match status" value="2"/>
</dbReference>
<dbReference type="PROSITE" id="PS51192">
    <property type="entry name" value="HELICASE_ATP_BIND_1"/>
    <property type="match status" value="1"/>
</dbReference>
<dbReference type="PROSITE" id="PS51194">
    <property type="entry name" value="HELICASE_CTER"/>
    <property type="match status" value="1"/>
</dbReference>
<evidence type="ECO:0000255" key="1">
    <source>
        <dbReference type="HAMAP-Rule" id="MF_01821"/>
    </source>
</evidence>
<proteinExistence type="inferred from homology"/>
<feature type="chain" id="PRO_1000088348" description="RNA polymerase-associated protein RapA">
    <location>
        <begin position="1"/>
        <end position="955"/>
    </location>
</feature>
<feature type="domain" description="Helicase ATP-binding" evidence="1">
    <location>
        <begin position="163"/>
        <end position="333"/>
    </location>
</feature>
<feature type="domain" description="Helicase C-terminal" evidence="1">
    <location>
        <begin position="478"/>
        <end position="642"/>
    </location>
</feature>
<feature type="short sequence motif" description="DEAH box">
    <location>
        <begin position="279"/>
        <end position="282"/>
    </location>
</feature>
<feature type="binding site" evidence="1">
    <location>
        <begin position="176"/>
        <end position="183"/>
    </location>
    <ligand>
        <name>ATP</name>
        <dbReference type="ChEBI" id="CHEBI:30616"/>
    </ligand>
</feature>
<sequence length="955" mass="107271">MPFALGQRWISDTETDLGLGTVVAVEGRMVTLLFPATGENRMYAKEEAPVTRVSFNVGDQIASHEDWTMTVEEVQEKDGLLIYVGVRTDNDEPVALKEVFLNNFIKFNKPQDRLFAGQIDRMSRFTLRYEALINQHQRRRNPTRGLAGGRVSLIPHQLYIAHEVGHRYAPRVLLADEVGLGKTIEAGMIIHQQLLSGRAHRVLILLPETLQHQWLVEMLRRFNLHFSLFDEERCIEAFADAENPFETEQLVICSLDFLRKKRRRFEQVLEAEWDLLVVDEAHHLEWSEEAPSRAYEMVEALAEQVPGVLLLTATPDQLGHQSHFARLRLLDPERFYDYDAFLAEEQAYGQVASAAQELLDGETLSDEAKRILASQLEGLDLSDAAARQQAVAKLLDQHGTGRVLFRNSRANIQGFPERHLNVYPMPLPEQYKTAIKVMGMMGGNGGDLQTRALRYLYPEKIFQQFEGDNATWTQFDPRVEWLLELLLSARQQKVLVICSEAATAIALEEALRTREGIRGAVFHEGMSILERDKASAYFAQQEGGAQVLLCSEIGSEGRNFQFASHLVLFDLPLNPDLLEQRIGRLDRIGQQNTVEIHVPYLEGTSQRALQLWYHDGLDAFEQTCPTARPVFEAVRDELFELLAANTGDQAPLDALLVKTRELHEPLKARLEQGRDRLLEIHSSGGAAAQQLVDKLAAEDDDTGMISFALKMFDEIGVNQDDRGENALVLTPGDHMLVSSFPGLPQDGMTITFDRNTALSRDDMALLSWDHPMMRGGIDLILGSEIGATSVALLKNKALPIGSILLELIFVAESAAHPQLYRFMPPTPIRLLMDKNGQNLGEKVAFDAFNRQLTPVNRHLGSKLVTASQPVIHGLIGKGQAIAEELKGGIVDKARAQMAQTLQQDLDRLEALKAVNPNVRDSELDYLRNLQAELHHLIDQTQLKLDAIRFIVVTHN</sequence>
<protein>
    <recommendedName>
        <fullName evidence="1">RNA polymerase-associated protein RapA</fullName>
        <ecNumber evidence="1">3.6.4.-</ecNumber>
    </recommendedName>
    <alternativeName>
        <fullName evidence="1">ATP-dependent helicase HepA</fullName>
    </alternativeName>
</protein>
<comment type="function">
    <text evidence="1">Transcription regulator that activates transcription by stimulating RNA polymerase (RNAP) recycling in case of stress conditions such as supercoiled DNA or high salt concentrations. Probably acts by releasing the RNAP, when it is trapped or immobilized on tightly supercoiled DNA. Does not activate transcription on linear DNA. Probably not involved in DNA repair.</text>
</comment>
<comment type="subunit">
    <text evidence="1">Interacts with the RNAP. Has a higher affinity for the core RNAP than for the holoenzyme. Its ATPase activity is stimulated by binding to RNAP.</text>
</comment>
<comment type="similarity">
    <text evidence="1">Belongs to the SNF2/RAD54 helicase family. RapA subfamily.</text>
</comment>
<accession>A0KGL5</accession>
<reference key="1">
    <citation type="journal article" date="2006" name="J. Bacteriol.">
        <title>Genome sequence of Aeromonas hydrophila ATCC 7966T: jack of all trades.</title>
        <authorList>
            <person name="Seshadri R."/>
            <person name="Joseph S.W."/>
            <person name="Chopra A.K."/>
            <person name="Sha J."/>
            <person name="Shaw J."/>
            <person name="Graf J."/>
            <person name="Haft D.H."/>
            <person name="Wu M."/>
            <person name="Ren Q."/>
            <person name="Rosovitz M.J."/>
            <person name="Madupu R."/>
            <person name="Tallon L."/>
            <person name="Kim M."/>
            <person name="Jin S."/>
            <person name="Vuong H."/>
            <person name="Stine O.C."/>
            <person name="Ali A."/>
            <person name="Horneman A.J."/>
            <person name="Heidelberg J.F."/>
        </authorList>
    </citation>
    <scope>NUCLEOTIDE SEQUENCE [LARGE SCALE GENOMIC DNA]</scope>
    <source>
        <strain>ATCC 7966 / DSM 30187 / BCRC 13018 / CCUG 14551 / JCM 1027 / KCTC 2358 / NCIMB 9240 / NCTC 8049</strain>
    </source>
</reference>
<keyword id="KW-0010">Activator</keyword>
<keyword id="KW-0067">ATP-binding</keyword>
<keyword id="KW-0238">DNA-binding</keyword>
<keyword id="KW-0347">Helicase</keyword>
<keyword id="KW-0378">Hydrolase</keyword>
<keyword id="KW-0547">Nucleotide-binding</keyword>
<keyword id="KW-1185">Reference proteome</keyword>
<keyword id="KW-0804">Transcription</keyword>
<keyword id="KW-0805">Transcription regulation</keyword>
<organism>
    <name type="scientific">Aeromonas hydrophila subsp. hydrophila (strain ATCC 7966 / DSM 30187 / BCRC 13018 / CCUG 14551 / JCM 1027 / KCTC 2358 / NCIMB 9240 / NCTC 8049)</name>
    <dbReference type="NCBI Taxonomy" id="380703"/>
    <lineage>
        <taxon>Bacteria</taxon>
        <taxon>Pseudomonadati</taxon>
        <taxon>Pseudomonadota</taxon>
        <taxon>Gammaproteobacteria</taxon>
        <taxon>Aeromonadales</taxon>
        <taxon>Aeromonadaceae</taxon>
        <taxon>Aeromonas</taxon>
    </lineage>
</organism>
<gene>
    <name evidence="1" type="primary">rapA</name>
    <name type="ordered locus">AHA_0864</name>
</gene>
<name>RAPA_AERHH</name>